<evidence type="ECO:0000255" key="1">
    <source>
        <dbReference type="HAMAP-Rule" id="MF_01337"/>
    </source>
</evidence>
<evidence type="ECO:0000305" key="2"/>
<comment type="function">
    <text evidence="1">This is one of the proteins that bind and probably mediate the attachment of the 5S RNA into the large ribosomal subunit, where it forms part of the central protuberance.</text>
</comment>
<comment type="subunit">
    <text evidence="1">Part of the 50S ribosomal subunit; part of the 5S rRNA/L5/L18/L25 subcomplex. Contacts the 5S and 23S rRNAs.</text>
</comment>
<comment type="similarity">
    <text evidence="1">Belongs to the universal ribosomal protein uL18 family.</text>
</comment>
<protein>
    <recommendedName>
        <fullName evidence="1">Large ribosomal subunit protein uL18</fullName>
    </recommendedName>
    <alternativeName>
        <fullName evidence="2">50S ribosomal protein L18</fullName>
    </alternativeName>
</protein>
<proteinExistence type="inferred from homology"/>
<name>RL18_NITHX</name>
<sequence>MSKLKVTNARRKQRVRLSLRRTANGRPRLSVFRSSKHIYAQVIDDLKGETLASASSLEKTMRDAGNTGANIDAAKAVGKLLAERAVKNGVKEVVFDRGSYLYHGRVKALADAARESGLSF</sequence>
<keyword id="KW-1185">Reference proteome</keyword>
<keyword id="KW-0687">Ribonucleoprotein</keyword>
<keyword id="KW-0689">Ribosomal protein</keyword>
<keyword id="KW-0694">RNA-binding</keyword>
<keyword id="KW-0699">rRNA-binding</keyword>
<reference key="1">
    <citation type="submission" date="2006-03" db="EMBL/GenBank/DDBJ databases">
        <title>Complete sequence of chromosome of Nitrobacter hamburgensis X14.</title>
        <authorList>
            <consortium name="US DOE Joint Genome Institute"/>
            <person name="Copeland A."/>
            <person name="Lucas S."/>
            <person name="Lapidus A."/>
            <person name="Barry K."/>
            <person name="Detter J.C."/>
            <person name="Glavina del Rio T."/>
            <person name="Hammon N."/>
            <person name="Israni S."/>
            <person name="Dalin E."/>
            <person name="Tice H."/>
            <person name="Pitluck S."/>
            <person name="Chain P."/>
            <person name="Malfatti S."/>
            <person name="Shin M."/>
            <person name="Vergez L."/>
            <person name="Schmutz J."/>
            <person name="Larimer F."/>
            <person name="Land M."/>
            <person name="Hauser L."/>
            <person name="Kyrpides N."/>
            <person name="Ivanova N."/>
            <person name="Ward B."/>
            <person name="Arp D."/>
            <person name="Klotz M."/>
            <person name="Stein L."/>
            <person name="O'Mullan G."/>
            <person name="Starkenburg S."/>
            <person name="Sayavedra L."/>
            <person name="Poret-Peterson A.T."/>
            <person name="Gentry M.E."/>
            <person name="Bruce D."/>
            <person name="Richardson P."/>
        </authorList>
    </citation>
    <scope>NUCLEOTIDE SEQUENCE [LARGE SCALE GENOMIC DNA]</scope>
    <source>
        <strain>DSM 10229 / NCIMB 13809 / X14</strain>
    </source>
</reference>
<feature type="chain" id="PRO_0000251334" description="Large ribosomal subunit protein uL18">
    <location>
        <begin position="1"/>
        <end position="120"/>
    </location>
</feature>
<gene>
    <name evidence="1" type="primary">rplR</name>
    <name type="ordered locus">Nham_1561</name>
</gene>
<accession>Q1QN14</accession>
<organism>
    <name type="scientific">Nitrobacter hamburgensis (strain DSM 10229 / NCIMB 13809 / X14)</name>
    <dbReference type="NCBI Taxonomy" id="323097"/>
    <lineage>
        <taxon>Bacteria</taxon>
        <taxon>Pseudomonadati</taxon>
        <taxon>Pseudomonadota</taxon>
        <taxon>Alphaproteobacteria</taxon>
        <taxon>Hyphomicrobiales</taxon>
        <taxon>Nitrobacteraceae</taxon>
        <taxon>Nitrobacter</taxon>
    </lineage>
</organism>
<dbReference type="EMBL" id="CP000319">
    <property type="protein sequence ID" value="ABE62383.1"/>
    <property type="molecule type" value="Genomic_DNA"/>
</dbReference>
<dbReference type="RefSeq" id="WP_011510069.1">
    <property type="nucleotide sequence ID" value="NC_007964.1"/>
</dbReference>
<dbReference type="SMR" id="Q1QN14"/>
<dbReference type="STRING" id="323097.Nham_1561"/>
<dbReference type="KEGG" id="nha:Nham_1561"/>
<dbReference type="eggNOG" id="COG0256">
    <property type="taxonomic scope" value="Bacteria"/>
</dbReference>
<dbReference type="HOGENOM" id="CLU_098841_0_1_5"/>
<dbReference type="OrthoDB" id="9810939at2"/>
<dbReference type="Proteomes" id="UP000001953">
    <property type="component" value="Chromosome"/>
</dbReference>
<dbReference type="GO" id="GO:0022625">
    <property type="term" value="C:cytosolic large ribosomal subunit"/>
    <property type="evidence" value="ECO:0007669"/>
    <property type="project" value="TreeGrafter"/>
</dbReference>
<dbReference type="GO" id="GO:0008097">
    <property type="term" value="F:5S rRNA binding"/>
    <property type="evidence" value="ECO:0007669"/>
    <property type="project" value="TreeGrafter"/>
</dbReference>
<dbReference type="GO" id="GO:0003735">
    <property type="term" value="F:structural constituent of ribosome"/>
    <property type="evidence" value="ECO:0007669"/>
    <property type="project" value="InterPro"/>
</dbReference>
<dbReference type="GO" id="GO:0006412">
    <property type="term" value="P:translation"/>
    <property type="evidence" value="ECO:0007669"/>
    <property type="project" value="UniProtKB-UniRule"/>
</dbReference>
<dbReference type="CDD" id="cd00432">
    <property type="entry name" value="Ribosomal_L18_L5e"/>
    <property type="match status" value="1"/>
</dbReference>
<dbReference type="FunFam" id="3.30.420.100:FF:000001">
    <property type="entry name" value="50S ribosomal protein L18"/>
    <property type="match status" value="1"/>
</dbReference>
<dbReference type="Gene3D" id="3.30.420.100">
    <property type="match status" value="1"/>
</dbReference>
<dbReference type="HAMAP" id="MF_01337_B">
    <property type="entry name" value="Ribosomal_uL18_B"/>
    <property type="match status" value="1"/>
</dbReference>
<dbReference type="InterPro" id="IPR004389">
    <property type="entry name" value="Ribosomal_uL18_bac-type"/>
</dbReference>
<dbReference type="InterPro" id="IPR005484">
    <property type="entry name" value="Ribosomal_uL18_bac/euk"/>
</dbReference>
<dbReference type="NCBIfam" id="TIGR00060">
    <property type="entry name" value="L18_bact"/>
    <property type="match status" value="1"/>
</dbReference>
<dbReference type="PANTHER" id="PTHR12899">
    <property type="entry name" value="39S RIBOSOMAL PROTEIN L18, MITOCHONDRIAL"/>
    <property type="match status" value="1"/>
</dbReference>
<dbReference type="PANTHER" id="PTHR12899:SF3">
    <property type="entry name" value="LARGE RIBOSOMAL SUBUNIT PROTEIN UL18M"/>
    <property type="match status" value="1"/>
</dbReference>
<dbReference type="Pfam" id="PF00861">
    <property type="entry name" value="Ribosomal_L18p"/>
    <property type="match status" value="1"/>
</dbReference>
<dbReference type="SUPFAM" id="SSF53137">
    <property type="entry name" value="Translational machinery components"/>
    <property type="match status" value="1"/>
</dbReference>